<name>RFTRM_RICPR</name>
<protein>
    <recommendedName>
        <fullName>Bifunctional methyltransferase</fullName>
    </recommendedName>
    <domain>
        <recommendedName>
            <fullName>Release factor glutamine methyltransferase</fullName>
            <shortName>RF MTase</shortName>
            <ecNumber>2.1.1.297</ecNumber>
        </recommendedName>
        <alternativeName>
            <fullName>M.RprHemKP</fullName>
        </alternativeName>
        <alternativeName>
            <fullName>N5-glutamine methyltransferase PrmC</fullName>
        </alternativeName>
        <alternativeName>
            <fullName>Protein-(glutamine-N5) MTase PrmC</fullName>
        </alternativeName>
        <alternativeName>
            <fullName>Protein-glutamine N-methyltransferase PrmC</fullName>
        </alternativeName>
    </domain>
    <domain>
        <recommendedName>
            <fullName>tRNA (guanine-N(7)-)-methyltransferase</fullName>
            <ecNumber>2.1.1.33</ecNumber>
        </recommendedName>
        <alternativeName>
            <fullName>tRNA (guanine(46)-N(7))-methyltransferase</fullName>
        </alternativeName>
        <alternativeName>
            <fullName>tRNA(m7G46)-methyltransferase</fullName>
        </alternativeName>
    </domain>
</protein>
<accession>Q9ZCB3</accession>
<proteinExistence type="inferred from homology"/>
<dbReference type="EC" id="2.1.1.297"/>
<dbReference type="EC" id="2.1.1.33"/>
<dbReference type="EMBL" id="AJ235273">
    <property type="protein sequence ID" value="CAA15271.1"/>
    <property type="molecule type" value="Genomic_DNA"/>
</dbReference>
<dbReference type="PIR" id="G71646">
    <property type="entry name" value="G71646"/>
</dbReference>
<dbReference type="RefSeq" id="NP_221195.1">
    <property type="nucleotide sequence ID" value="NC_000963.1"/>
</dbReference>
<dbReference type="SMR" id="Q9ZCB3"/>
<dbReference type="STRING" id="272947.gene:17555916"/>
<dbReference type="EnsemblBacteria" id="CAA15271">
    <property type="protein sequence ID" value="CAA15271"/>
    <property type="gene ID" value="CAA15271"/>
</dbReference>
<dbReference type="KEGG" id="rpr:RP847"/>
<dbReference type="PATRIC" id="fig|272947.5.peg.885"/>
<dbReference type="eggNOG" id="COG0220">
    <property type="taxonomic scope" value="Bacteria"/>
</dbReference>
<dbReference type="eggNOG" id="COG2890">
    <property type="taxonomic scope" value="Bacteria"/>
</dbReference>
<dbReference type="HOGENOM" id="CLU_018398_3_3_5"/>
<dbReference type="OrthoDB" id="9800643at2"/>
<dbReference type="Proteomes" id="UP000002480">
    <property type="component" value="Chromosome"/>
</dbReference>
<dbReference type="GO" id="GO:0003676">
    <property type="term" value="F:nucleic acid binding"/>
    <property type="evidence" value="ECO:0007669"/>
    <property type="project" value="InterPro"/>
</dbReference>
<dbReference type="GO" id="GO:0102559">
    <property type="term" value="F:protein-(glutamine-N5) methyltransferase activity"/>
    <property type="evidence" value="ECO:0007669"/>
    <property type="project" value="UniProtKB-EC"/>
</dbReference>
<dbReference type="GO" id="GO:0036009">
    <property type="term" value="F:protein-glutamine N-methyltransferase activity"/>
    <property type="evidence" value="ECO:0007669"/>
    <property type="project" value="UniProtKB-UniRule"/>
</dbReference>
<dbReference type="GO" id="GO:0008176">
    <property type="term" value="F:tRNA (guanine(46)-N7)-methyltransferase activity"/>
    <property type="evidence" value="ECO:0007669"/>
    <property type="project" value="UniProtKB-UniRule"/>
</dbReference>
<dbReference type="CDD" id="cd02440">
    <property type="entry name" value="AdoMet_MTases"/>
    <property type="match status" value="1"/>
</dbReference>
<dbReference type="Gene3D" id="1.10.8.10">
    <property type="entry name" value="DNA helicase RuvA subunit, C-terminal domain"/>
    <property type="match status" value="1"/>
</dbReference>
<dbReference type="Gene3D" id="3.40.50.150">
    <property type="entry name" value="Vaccinia Virus protein VP39"/>
    <property type="match status" value="2"/>
</dbReference>
<dbReference type="HAMAP" id="MF_02126">
    <property type="entry name" value="RF_methyltr_PrmC"/>
    <property type="match status" value="1"/>
</dbReference>
<dbReference type="HAMAP" id="MF_01057">
    <property type="entry name" value="tRNA_methyltr_TrmB"/>
    <property type="match status" value="1"/>
</dbReference>
<dbReference type="InterPro" id="IPR002052">
    <property type="entry name" value="DNA_methylase_N6_adenine_CS"/>
</dbReference>
<dbReference type="InterPro" id="IPR004556">
    <property type="entry name" value="HemK-like"/>
</dbReference>
<dbReference type="InterPro" id="IPR050320">
    <property type="entry name" value="N5-glutamine_MTase"/>
</dbReference>
<dbReference type="InterPro" id="IPR040758">
    <property type="entry name" value="PrmC_N"/>
</dbReference>
<dbReference type="InterPro" id="IPR019874">
    <property type="entry name" value="RF_methyltr_PrmC"/>
</dbReference>
<dbReference type="InterPro" id="IPR029063">
    <property type="entry name" value="SAM-dependent_MTases_sf"/>
</dbReference>
<dbReference type="InterPro" id="IPR007848">
    <property type="entry name" value="Small_mtfrase_dom"/>
</dbReference>
<dbReference type="InterPro" id="IPR003358">
    <property type="entry name" value="tRNA_(Gua-N-7)_MeTrfase_Trmb"/>
</dbReference>
<dbReference type="InterPro" id="IPR055361">
    <property type="entry name" value="tRNA_methyltr_TrmB_bact"/>
</dbReference>
<dbReference type="NCBIfam" id="TIGR00536">
    <property type="entry name" value="hemK_fam"/>
    <property type="match status" value="1"/>
</dbReference>
<dbReference type="NCBIfam" id="NF002421">
    <property type="entry name" value="PRK01544.1"/>
    <property type="match status" value="1"/>
</dbReference>
<dbReference type="NCBIfam" id="TIGR03534">
    <property type="entry name" value="RF_mod_PrmC"/>
    <property type="match status" value="1"/>
</dbReference>
<dbReference type="NCBIfam" id="TIGR00091">
    <property type="entry name" value="tRNA (guanosine(46)-N7)-methyltransferase TrmB"/>
    <property type="match status" value="1"/>
</dbReference>
<dbReference type="PANTHER" id="PTHR18895">
    <property type="entry name" value="HEMK METHYLTRANSFERASE"/>
    <property type="match status" value="1"/>
</dbReference>
<dbReference type="PANTHER" id="PTHR18895:SF74">
    <property type="entry name" value="MTRF1L RELEASE FACTOR GLUTAMINE METHYLTRANSFERASE"/>
    <property type="match status" value="1"/>
</dbReference>
<dbReference type="Pfam" id="PF02390">
    <property type="entry name" value="Methyltransf_4"/>
    <property type="match status" value="1"/>
</dbReference>
<dbReference type="Pfam" id="PF05175">
    <property type="entry name" value="MTS"/>
    <property type="match status" value="1"/>
</dbReference>
<dbReference type="Pfam" id="PF17827">
    <property type="entry name" value="PrmC_N"/>
    <property type="match status" value="1"/>
</dbReference>
<dbReference type="SUPFAM" id="SSF53335">
    <property type="entry name" value="S-adenosyl-L-methionine-dependent methyltransferases"/>
    <property type="match status" value="2"/>
</dbReference>
<dbReference type="PROSITE" id="PS51625">
    <property type="entry name" value="SAM_MT_TRMB"/>
    <property type="match status" value="1"/>
</dbReference>
<organism>
    <name type="scientific">Rickettsia prowazekii (strain Madrid E)</name>
    <dbReference type="NCBI Taxonomy" id="272947"/>
    <lineage>
        <taxon>Bacteria</taxon>
        <taxon>Pseudomonadati</taxon>
        <taxon>Pseudomonadota</taxon>
        <taxon>Alphaproteobacteria</taxon>
        <taxon>Rickettsiales</taxon>
        <taxon>Rickettsiaceae</taxon>
        <taxon>Rickettsieae</taxon>
        <taxon>Rickettsia</taxon>
        <taxon>typhus group</taxon>
    </lineage>
</organism>
<sequence length="518" mass="59564">MQYSIKQILSNANDKLNKIGINLPGLEARILLQHVTNKPIEHLLIKLNEQLSEAEIEAFEKLLERRLAHEPIAYIIGVKEFYSREFIVNKHVLIPRIDTEVLVDVVIGLVVSRNNLHMFSKLKSLDSVLTTQSYNILELGTGSGCIAISLLCELPNTNIIATDISVDAIKVAKSNSIKYNVTDRIQIIHSNWFEKLDKQKFDFIVSNPPYISHTEKLKMAIETINYEPSIALFAEEDGLEAYSIIAKNAKQFLKPNGKIILEIGFSQAAKVSKIFLNYGYNIDYIYRDLQSHNRVIEISPINLNRSYARRIGKSLSKMQQKLLDNELPKYLFSKEKFKSEKRKVFLEIGFGMGEHLINQAKINPDTLFIGVEVYLNGVANVLKHSAQHNITNFLLFPNNLDLILNDLPNNSLDGIYILFPDPWIKNKKKKKRIFNKERLKILQNKLKNNGNLVFASDIENYFYEAMALIRQNGNFEIIHNDDYLQPHDNYIITKYHQKAINANRTAKFMILQHALTDH</sequence>
<keyword id="KW-0489">Methyltransferase</keyword>
<keyword id="KW-1185">Reference proteome</keyword>
<keyword id="KW-0949">S-adenosyl-L-methionine</keyword>
<keyword id="KW-0808">Transferase</keyword>
<keyword id="KW-0819">tRNA processing</keyword>
<evidence type="ECO:0000250" key="1"/>
<evidence type="ECO:0000305" key="2"/>
<reference key="1">
    <citation type="journal article" date="1998" name="Nature">
        <title>The genome sequence of Rickettsia prowazekii and the origin of mitochondria.</title>
        <authorList>
            <person name="Andersson S.G.E."/>
            <person name="Zomorodipour A."/>
            <person name="Andersson J.O."/>
            <person name="Sicheritz-Ponten T."/>
            <person name="Alsmark U.C.M."/>
            <person name="Podowski R.M."/>
            <person name="Naeslund A.K."/>
            <person name="Eriksson A.-S."/>
            <person name="Winkler H.H."/>
            <person name="Kurland C.G."/>
        </authorList>
    </citation>
    <scope>NUCLEOTIDE SEQUENCE [LARGE SCALE GENOMIC DNA]</scope>
    <source>
        <strain>Madrid E</strain>
    </source>
</reference>
<feature type="chain" id="PRO_0000157174" description="Bifunctional methyltransferase">
    <location>
        <begin position="1"/>
        <end position="518"/>
    </location>
</feature>
<feature type="region of interest" description="RF MTase">
    <location>
        <begin position="1"/>
        <end position="302"/>
    </location>
</feature>
<feature type="region of interest" description="HemK">
    <location>
        <begin position="1"/>
        <end position="300"/>
    </location>
</feature>
<feature type="region of interest" description="tRNA (guanine-N(7)-)-methyltransferase">
    <location>
        <begin position="301"/>
        <end position="518"/>
    </location>
</feature>
<feature type="region of interest" description="tRNA MTase">
    <location>
        <begin position="305"/>
        <end position="518"/>
    </location>
</feature>
<feature type="active site" evidence="1">
    <location>
        <position position="421"/>
    </location>
</feature>
<feature type="binding site" evidence="1">
    <location>
        <begin position="140"/>
        <end position="144"/>
    </location>
    <ligand>
        <name>S-adenosyl-L-methionine</name>
        <dbReference type="ChEBI" id="CHEBI:59789"/>
    </ligand>
</feature>
<feature type="binding site" evidence="1">
    <location>
        <position position="163"/>
    </location>
    <ligand>
        <name>S-adenosyl-L-methionine</name>
        <dbReference type="ChEBI" id="CHEBI:59789"/>
    </ligand>
</feature>
<feature type="binding site" evidence="1">
    <location>
        <position position="192"/>
    </location>
    <ligand>
        <name>S-adenosyl-L-methionine</name>
        <dbReference type="ChEBI" id="CHEBI:59789"/>
    </ligand>
</feature>
<feature type="binding site" evidence="1">
    <location>
        <begin position="207"/>
        <end position="210"/>
    </location>
    <ligand>
        <name>substrate</name>
    </ligand>
</feature>
<feature type="binding site" evidence="1">
    <location>
        <position position="207"/>
    </location>
    <ligand>
        <name>S-adenosyl-L-methionine</name>
        <dbReference type="ChEBI" id="CHEBI:59789"/>
    </ligand>
</feature>
<feature type="binding site" evidence="1">
    <location>
        <position position="347"/>
    </location>
    <ligand>
        <name>S-adenosyl-L-methionine</name>
        <dbReference type="ChEBI" id="CHEBI:59789"/>
    </ligand>
</feature>
<feature type="binding site" evidence="1">
    <location>
        <position position="372"/>
    </location>
    <ligand>
        <name>S-adenosyl-L-methionine</name>
        <dbReference type="ChEBI" id="CHEBI:59789"/>
    </ligand>
</feature>
<feature type="binding site" evidence="1">
    <location>
        <position position="399"/>
    </location>
    <ligand>
        <name>S-adenosyl-L-methionine</name>
        <dbReference type="ChEBI" id="CHEBI:59789"/>
    </ligand>
</feature>
<feature type="binding site" evidence="1">
    <location>
        <position position="421"/>
    </location>
    <ligand>
        <name>S-adenosyl-L-methionine</name>
        <dbReference type="ChEBI" id="CHEBI:59789"/>
    </ligand>
</feature>
<feature type="binding site" evidence="1">
    <location>
        <position position="425"/>
    </location>
    <ligand>
        <name>substrate</name>
    </ligand>
</feature>
<feature type="binding site" evidence="1">
    <location>
        <position position="457"/>
    </location>
    <ligand>
        <name>substrate</name>
    </ligand>
</feature>
<comment type="function">
    <text evidence="1">Methylates the class 1 translation termination release factors RF1/PrfA and RF2/PrfB on the glutamine residue of the universally conserved GGQ motif.</text>
</comment>
<comment type="function">
    <text evidence="1">Catalyzes the formation of N(7)-methylguanine at position 46 (m7G46) in tRNA.</text>
</comment>
<comment type="catalytic activity">
    <reaction>
        <text>L-glutaminyl-[peptide chain release factor] + S-adenosyl-L-methionine = N(5)-methyl-L-glutaminyl-[peptide chain release factor] + S-adenosyl-L-homocysteine + H(+)</text>
        <dbReference type="Rhea" id="RHEA:42896"/>
        <dbReference type="Rhea" id="RHEA-COMP:10271"/>
        <dbReference type="Rhea" id="RHEA-COMP:10272"/>
        <dbReference type="ChEBI" id="CHEBI:15378"/>
        <dbReference type="ChEBI" id="CHEBI:30011"/>
        <dbReference type="ChEBI" id="CHEBI:57856"/>
        <dbReference type="ChEBI" id="CHEBI:59789"/>
        <dbReference type="ChEBI" id="CHEBI:61891"/>
        <dbReference type="EC" id="2.1.1.297"/>
    </reaction>
</comment>
<comment type="catalytic activity">
    <reaction>
        <text>guanosine(46) in tRNA + S-adenosyl-L-methionine = N(7)-methylguanosine(46) in tRNA + S-adenosyl-L-homocysteine</text>
        <dbReference type="Rhea" id="RHEA:42708"/>
        <dbReference type="Rhea" id="RHEA-COMP:10188"/>
        <dbReference type="Rhea" id="RHEA-COMP:10189"/>
        <dbReference type="ChEBI" id="CHEBI:57856"/>
        <dbReference type="ChEBI" id="CHEBI:59789"/>
        <dbReference type="ChEBI" id="CHEBI:74269"/>
        <dbReference type="ChEBI" id="CHEBI:74480"/>
        <dbReference type="EC" id="2.1.1.33"/>
    </reaction>
</comment>
<comment type="similarity">
    <text evidence="2">In the C-terminal section; belongs to the class I-like SAM-binding methyltransferase superfamily. TrmB family.</text>
</comment>
<comment type="similarity">
    <text evidence="2">In the N-terminal section; belongs to the protein N5-glutamine methyltransferase family. PrmC subfamily.</text>
</comment>
<gene>
    <name type="primary">prmC/trmB</name>
    <name type="synonym">hemK</name>
    <name type="ordered locus">RP847</name>
</gene>